<dbReference type="EC" id="2.5.1.145" evidence="1"/>
<dbReference type="EMBL" id="AM421808">
    <property type="protein sequence ID" value="CAM10298.1"/>
    <property type="molecule type" value="Genomic_DNA"/>
</dbReference>
<dbReference type="RefSeq" id="WP_002217264.1">
    <property type="nucleotide sequence ID" value="NC_008767.1"/>
</dbReference>
<dbReference type="SMR" id="A1KTV8"/>
<dbReference type="KEGG" id="nmc:NMC1036"/>
<dbReference type="HOGENOM" id="CLU_013386_1_0_4"/>
<dbReference type="UniPathway" id="UPA00664"/>
<dbReference type="Proteomes" id="UP000002286">
    <property type="component" value="Chromosome"/>
</dbReference>
<dbReference type="GO" id="GO:0005886">
    <property type="term" value="C:plasma membrane"/>
    <property type="evidence" value="ECO:0007669"/>
    <property type="project" value="UniProtKB-SubCell"/>
</dbReference>
<dbReference type="GO" id="GO:0008961">
    <property type="term" value="F:phosphatidylglycerol-prolipoprotein diacylglyceryl transferase activity"/>
    <property type="evidence" value="ECO:0007669"/>
    <property type="project" value="UniProtKB-UniRule"/>
</dbReference>
<dbReference type="GO" id="GO:0042158">
    <property type="term" value="P:lipoprotein biosynthetic process"/>
    <property type="evidence" value="ECO:0007669"/>
    <property type="project" value="UniProtKB-UniRule"/>
</dbReference>
<dbReference type="HAMAP" id="MF_01147">
    <property type="entry name" value="Lgt"/>
    <property type="match status" value="1"/>
</dbReference>
<dbReference type="InterPro" id="IPR001640">
    <property type="entry name" value="Lgt"/>
</dbReference>
<dbReference type="NCBIfam" id="TIGR00544">
    <property type="entry name" value="lgt"/>
    <property type="match status" value="1"/>
</dbReference>
<dbReference type="PANTHER" id="PTHR30589:SF0">
    <property type="entry name" value="PHOSPHATIDYLGLYCEROL--PROLIPOPROTEIN DIACYLGLYCERYL TRANSFERASE"/>
    <property type="match status" value="1"/>
</dbReference>
<dbReference type="PANTHER" id="PTHR30589">
    <property type="entry name" value="PROLIPOPROTEIN DIACYLGLYCERYL TRANSFERASE"/>
    <property type="match status" value="1"/>
</dbReference>
<dbReference type="Pfam" id="PF01790">
    <property type="entry name" value="LGT"/>
    <property type="match status" value="1"/>
</dbReference>
<dbReference type="PROSITE" id="PS01311">
    <property type="entry name" value="LGT"/>
    <property type="match status" value="1"/>
</dbReference>
<evidence type="ECO:0000255" key="1">
    <source>
        <dbReference type="HAMAP-Rule" id="MF_01147"/>
    </source>
</evidence>
<name>LGT_NEIMF</name>
<protein>
    <recommendedName>
        <fullName evidence="1">Phosphatidylglycerol--prolipoprotein diacylglyceryl transferase</fullName>
        <ecNumber evidence="1">2.5.1.145</ecNumber>
    </recommendedName>
</protein>
<keyword id="KW-0997">Cell inner membrane</keyword>
<keyword id="KW-1003">Cell membrane</keyword>
<keyword id="KW-0472">Membrane</keyword>
<keyword id="KW-0808">Transferase</keyword>
<keyword id="KW-0812">Transmembrane</keyword>
<keyword id="KW-1133">Transmembrane helix</keyword>
<comment type="function">
    <text evidence="1">Catalyzes the transfer of the diacylglyceryl group from phosphatidylglycerol to the sulfhydryl group of the N-terminal cysteine of a prolipoprotein, the first step in the formation of mature lipoproteins.</text>
</comment>
<comment type="catalytic activity">
    <reaction evidence="1">
        <text>L-cysteinyl-[prolipoprotein] + a 1,2-diacyl-sn-glycero-3-phospho-(1'-sn-glycerol) = an S-1,2-diacyl-sn-glyceryl-L-cysteinyl-[prolipoprotein] + sn-glycerol 1-phosphate + H(+)</text>
        <dbReference type="Rhea" id="RHEA:56712"/>
        <dbReference type="Rhea" id="RHEA-COMP:14679"/>
        <dbReference type="Rhea" id="RHEA-COMP:14680"/>
        <dbReference type="ChEBI" id="CHEBI:15378"/>
        <dbReference type="ChEBI" id="CHEBI:29950"/>
        <dbReference type="ChEBI" id="CHEBI:57685"/>
        <dbReference type="ChEBI" id="CHEBI:64716"/>
        <dbReference type="ChEBI" id="CHEBI:140658"/>
        <dbReference type="EC" id="2.5.1.145"/>
    </reaction>
</comment>
<comment type="pathway">
    <text evidence="1">Protein modification; lipoprotein biosynthesis (diacylglyceryl transfer).</text>
</comment>
<comment type="subcellular location">
    <subcellularLocation>
        <location evidence="1">Cell inner membrane</location>
        <topology evidence="1">Multi-pass membrane protein</topology>
    </subcellularLocation>
</comment>
<comment type="similarity">
    <text evidence="1">Belongs to the Lgt family.</text>
</comment>
<feature type="chain" id="PRO_1000053458" description="Phosphatidylglycerol--prolipoprotein diacylglyceryl transferase">
    <location>
        <begin position="1"/>
        <end position="283"/>
    </location>
</feature>
<feature type="transmembrane region" description="Helical" evidence="1">
    <location>
        <begin position="17"/>
        <end position="37"/>
    </location>
</feature>
<feature type="transmembrane region" description="Helical" evidence="1">
    <location>
        <begin position="56"/>
        <end position="76"/>
    </location>
</feature>
<feature type="transmembrane region" description="Helical" evidence="1">
    <location>
        <begin position="92"/>
        <end position="112"/>
    </location>
</feature>
<feature type="transmembrane region" description="Helical" evidence="1">
    <location>
        <begin position="117"/>
        <end position="137"/>
    </location>
</feature>
<feature type="transmembrane region" description="Helical" evidence="1">
    <location>
        <begin position="194"/>
        <end position="214"/>
    </location>
</feature>
<feature type="transmembrane region" description="Helical" evidence="1">
    <location>
        <begin position="222"/>
        <end position="242"/>
    </location>
</feature>
<feature type="transmembrane region" description="Helical" evidence="1">
    <location>
        <begin position="255"/>
        <end position="275"/>
    </location>
</feature>
<feature type="binding site" evidence="1">
    <location>
        <position position="139"/>
    </location>
    <ligand>
        <name>a 1,2-diacyl-sn-glycero-3-phospho-(1'-sn-glycerol)</name>
        <dbReference type="ChEBI" id="CHEBI:64716"/>
    </ligand>
</feature>
<organism>
    <name type="scientific">Neisseria meningitidis serogroup C / serotype 2a (strain ATCC 700532 / DSM 15464 / FAM18)</name>
    <dbReference type="NCBI Taxonomy" id="272831"/>
    <lineage>
        <taxon>Bacteria</taxon>
        <taxon>Pseudomonadati</taxon>
        <taxon>Pseudomonadota</taxon>
        <taxon>Betaproteobacteria</taxon>
        <taxon>Neisseriales</taxon>
        <taxon>Neisseriaceae</taxon>
        <taxon>Neisseria</taxon>
    </lineage>
</organism>
<accession>A1KTV8</accession>
<proteinExistence type="inferred from homology"/>
<reference key="1">
    <citation type="journal article" date="2007" name="PLoS Genet.">
        <title>Meningococcal genetic variation mechanisms viewed through comparative analysis of serogroup C strain FAM18.</title>
        <authorList>
            <person name="Bentley S.D."/>
            <person name="Vernikos G.S."/>
            <person name="Snyder L.A.S."/>
            <person name="Churcher C."/>
            <person name="Arrowsmith C."/>
            <person name="Chillingworth T."/>
            <person name="Cronin A."/>
            <person name="Davis P.H."/>
            <person name="Holroyd N.E."/>
            <person name="Jagels K."/>
            <person name="Maddison M."/>
            <person name="Moule S."/>
            <person name="Rabbinowitsch E."/>
            <person name="Sharp S."/>
            <person name="Unwin L."/>
            <person name="Whitehead S."/>
            <person name="Quail M.A."/>
            <person name="Achtman M."/>
            <person name="Barrell B.G."/>
            <person name="Saunders N.J."/>
            <person name="Parkhill J."/>
        </authorList>
    </citation>
    <scope>NUCLEOTIDE SEQUENCE [LARGE SCALE GENOMIC DNA]</scope>
    <source>
        <strain>ATCC 700532 / DSM 15464 / FAM18</strain>
    </source>
</reference>
<sequence>MIIHPQFDPVLISIGPLAVRWYALSYILGFILFTFLGRRRIAQGLSVFTKESLDDFLTWGILGVILGGRLGYVLFYKFSDYLAHPLDIFKVWEGGMSFHGGFLGVVIAIWLFGRKHGIGFLKLMDTVAPLVPLGLASGRIGNFINGELWGRVTDINAFWAMGFPQARYEDAEAAAHNPLWAEWLQQYGMLPRHPSQLYQFALEGICLFAVVWLFSKKQRPTGQVASLFLGGYGIFRFIAEFARQPDDYLGLLTLGLSMGQWLSVPMIVLGIVGFVRFGMKKQH</sequence>
<gene>
    <name evidence="1" type="primary">lgt</name>
    <name type="ordered locus">NMC1036</name>
</gene>